<evidence type="ECO:0000255" key="1"/>
<evidence type="ECO:0000256" key="2">
    <source>
        <dbReference type="SAM" id="MobiDB-lite"/>
    </source>
</evidence>
<evidence type="ECO:0000269" key="3">
    <source>
    </source>
</evidence>
<evidence type="ECO:0000269" key="4">
    <source>
    </source>
</evidence>
<evidence type="ECO:0000269" key="5">
    <source>
    </source>
</evidence>
<evidence type="ECO:0000305" key="6"/>
<accession>Q75HB1</accession>
<accession>A0A0P0W166</accession>
<accession>Q7XJ41</accession>
<accession>Q8SBD0</accession>
<comment type="function">
    <text evidence="4 5">Iron transporter involved in the uptake of iron from the rhizosphere across the plasma membrane in the root epidermal layer. May also transport other divalent cations.</text>
</comment>
<comment type="subcellular location">
    <subcellularLocation>
        <location evidence="4">Cell membrane</location>
        <topology evidence="4">Multi-pass membrane protein</topology>
    </subcellularLocation>
</comment>
<comment type="tissue specificity">
    <text evidence="4">Expressed in companion cells in the upper region of the root.</text>
</comment>
<comment type="induction">
    <text evidence="3 4 5">By iron and zinc deficiency in roots.</text>
</comment>
<comment type="miscellaneous">
    <text>Plants overexpressing IRT1 show enhanced tolerance to iron deficiency at the seedling stage, elevated content of cadmium, iron and zinc in roots, shoots and mature seeds, and are sensitive to an excess of zinc or cadmium.</text>
</comment>
<comment type="similarity">
    <text evidence="6">Belongs to the ZIP transporter (TC 2.A.5) family.</text>
</comment>
<proteinExistence type="evidence at transcript level"/>
<reference key="1">
    <citation type="journal article" date="2002" name="J. Exp. Bot.">
        <title>Cloning an iron-regulated metal transporter from rice.</title>
        <authorList>
            <person name="Bughio N."/>
            <person name="Yamaguchi H."/>
            <person name="Nishizawa N.K."/>
            <person name="Nakanishi H."/>
            <person name="Mori S."/>
        </authorList>
    </citation>
    <scope>NUCLEOTIDE SEQUENCE [MRNA]</scope>
    <scope>INDUCTION</scope>
    <source>
        <tissue>Root</tissue>
    </source>
</reference>
<reference key="2">
    <citation type="submission" date="2003-06" db="EMBL/GenBank/DDBJ databases">
        <title>Isolation and characterization of a rice iron transporter gene.</title>
        <authorList>
            <person name="Quanhong Y."/>
            <person name="Rihe P."/>
            <person name="Aisheng X."/>
        </authorList>
    </citation>
    <scope>NUCLEOTIDE SEQUENCE [MRNA]</scope>
</reference>
<reference key="3">
    <citation type="journal article" date="2005" name="Genome Res.">
        <title>Sequence, annotation, and analysis of synteny between rice chromosome 3 and diverged grass species.</title>
        <authorList>
            <consortium name="The rice chromosome 3 sequencing consortium"/>
            <person name="Buell C.R."/>
            <person name="Yuan Q."/>
            <person name="Ouyang S."/>
            <person name="Liu J."/>
            <person name="Zhu W."/>
            <person name="Wang A."/>
            <person name="Maiti R."/>
            <person name="Haas B."/>
            <person name="Wortman J."/>
            <person name="Pertea M."/>
            <person name="Jones K.M."/>
            <person name="Kim M."/>
            <person name="Overton L."/>
            <person name="Tsitrin T."/>
            <person name="Fadrosh D."/>
            <person name="Bera J."/>
            <person name="Weaver B."/>
            <person name="Jin S."/>
            <person name="Johri S."/>
            <person name="Reardon M."/>
            <person name="Webb K."/>
            <person name="Hill J."/>
            <person name="Moffat K."/>
            <person name="Tallon L."/>
            <person name="Van Aken S."/>
            <person name="Lewis M."/>
            <person name="Utterback T."/>
            <person name="Feldblyum T."/>
            <person name="Zismann V."/>
            <person name="Iobst S."/>
            <person name="Hsiao J."/>
            <person name="de Vazeille A.R."/>
            <person name="Salzberg S.L."/>
            <person name="White O."/>
            <person name="Fraser C.M."/>
            <person name="Yu Y."/>
            <person name="Kim H."/>
            <person name="Rambo T."/>
            <person name="Currie J."/>
            <person name="Collura K."/>
            <person name="Kernodle-Thompson S."/>
            <person name="Wei F."/>
            <person name="Kudrna K."/>
            <person name="Ammiraju J.S.S."/>
            <person name="Luo M."/>
            <person name="Goicoechea J.L."/>
            <person name="Wing R.A."/>
            <person name="Henry D."/>
            <person name="Oates R."/>
            <person name="Palmer M."/>
            <person name="Pries G."/>
            <person name="Saski C."/>
            <person name="Simmons J."/>
            <person name="Soderlund C."/>
            <person name="Nelson W."/>
            <person name="de la Bastide M."/>
            <person name="Spiegel L."/>
            <person name="Nascimento L."/>
            <person name="Huang E."/>
            <person name="Preston R."/>
            <person name="Zutavern T."/>
            <person name="Palmer L."/>
            <person name="O'Shaughnessy A."/>
            <person name="Dike S."/>
            <person name="McCombie W.R."/>
            <person name="Minx P."/>
            <person name="Cordum H."/>
            <person name="Wilson R."/>
            <person name="Jin W."/>
            <person name="Lee H.R."/>
            <person name="Jiang J."/>
            <person name="Jackson S."/>
        </authorList>
    </citation>
    <scope>NUCLEOTIDE SEQUENCE [LARGE SCALE GENOMIC DNA]</scope>
    <source>
        <strain>cv. Nipponbare</strain>
    </source>
</reference>
<reference key="4">
    <citation type="journal article" date="2005" name="Nature">
        <title>The map-based sequence of the rice genome.</title>
        <authorList>
            <consortium name="International rice genome sequencing project (IRGSP)"/>
        </authorList>
    </citation>
    <scope>NUCLEOTIDE SEQUENCE [LARGE SCALE GENOMIC DNA]</scope>
    <source>
        <strain>cv. Nipponbare</strain>
    </source>
</reference>
<reference key="5">
    <citation type="journal article" date="2008" name="Nucleic Acids Res.">
        <title>The rice annotation project database (RAP-DB): 2008 update.</title>
        <authorList>
            <consortium name="The rice annotation project (RAP)"/>
        </authorList>
    </citation>
    <scope>GENOME REANNOTATION</scope>
    <source>
        <strain>cv. Nipponbare</strain>
    </source>
</reference>
<reference key="6">
    <citation type="journal article" date="2013" name="Rice">
        <title>Improvement of the Oryza sativa Nipponbare reference genome using next generation sequence and optical map data.</title>
        <authorList>
            <person name="Kawahara Y."/>
            <person name="de la Bastide M."/>
            <person name="Hamilton J.P."/>
            <person name="Kanamori H."/>
            <person name="McCombie W.R."/>
            <person name="Ouyang S."/>
            <person name="Schwartz D.C."/>
            <person name="Tanaka T."/>
            <person name="Wu J."/>
            <person name="Zhou S."/>
            <person name="Childs K.L."/>
            <person name="Davidson R.M."/>
            <person name="Lin H."/>
            <person name="Quesada-Ocampo L."/>
            <person name="Vaillancourt B."/>
            <person name="Sakai H."/>
            <person name="Lee S.S."/>
            <person name="Kim J."/>
            <person name="Numa H."/>
            <person name="Itoh T."/>
            <person name="Buell C.R."/>
            <person name="Matsumoto T."/>
        </authorList>
    </citation>
    <scope>GENOME REANNOTATION</scope>
    <source>
        <strain>cv. Nipponbare</strain>
    </source>
</reference>
<reference key="7">
    <citation type="journal article" date="2003" name="Science">
        <title>Collection, mapping, and annotation of over 28,000 cDNA clones from japonica rice.</title>
        <authorList>
            <consortium name="The rice full-length cDNA consortium"/>
        </authorList>
    </citation>
    <scope>NUCLEOTIDE SEQUENCE [LARGE SCALE MRNA]</scope>
    <source>
        <strain>cv. Nipponbare</strain>
    </source>
</reference>
<reference key="8">
    <citation type="journal article" date="2006" name="Plant J.">
        <title>Rice plants take up iron as an Fe3+-phytosiderophore and as Fe2+.</title>
        <authorList>
            <person name="Ishimaru Y."/>
            <person name="Suzuki M."/>
            <person name="Tsukamoto T."/>
            <person name="Suzuki K."/>
            <person name="Nakazono M."/>
            <person name="Kobayashi T."/>
            <person name="Wada Y."/>
            <person name="Watanabe S."/>
            <person name="Matsuhashi S."/>
            <person name="Takahashi M."/>
            <person name="Nakanishi H."/>
            <person name="Mori S."/>
            <person name="Nishizawa N.K."/>
        </authorList>
    </citation>
    <scope>FUNCTION</scope>
    <scope>SUBCELLULAR LOCATION</scope>
    <scope>TISSUE SPECIFICITY</scope>
    <scope>INDUCTION</scope>
</reference>
<reference key="9">
    <citation type="journal article" date="2009" name="Plant Cell Environ.">
        <title>Over-expression of OsIRT1 leads to increased iron and zinc accumulations in rice.</title>
        <authorList>
            <person name="Lee S."/>
            <person name="An G."/>
        </authorList>
    </citation>
    <scope>FUNCTION</scope>
    <scope>INDUCTION</scope>
</reference>
<gene>
    <name type="primary">IRT1</name>
    <name type="ordered locus">Os03g0667500</name>
    <name type="ordered locus">LOC_Os03g46470</name>
    <name type="ORF">OSJNBa0056E06.2</name>
    <name type="ORF">OSJNBb0036M02.13</name>
</gene>
<keyword id="KW-1003">Cell membrane</keyword>
<keyword id="KW-0406">Ion transport</keyword>
<keyword id="KW-0408">Iron</keyword>
<keyword id="KW-0410">Iron transport</keyword>
<keyword id="KW-0472">Membrane</keyword>
<keyword id="KW-1185">Reference proteome</keyword>
<keyword id="KW-0732">Signal</keyword>
<keyword id="KW-0812">Transmembrane</keyword>
<keyword id="KW-1133">Transmembrane helix</keyword>
<keyword id="KW-0813">Transport</keyword>
<protein>
    <recommendedName>
        <fullName>Fe(2+) transport protein 1</fullName>
    </recommendedName>
    <alternativeName>
        <fullName>Fe(II) transport protein 1</fullName>
    </alternativeName>
    <alternativeName>
        <fullName>Iron-regulated transporter 1</fullName>
        <shortName>OsIRT1</shortName>
    </alternativeName>
</protein>
<name>IRT1_ORYSJ</name>
<organism>
    <name type="scientific">Oryza sativa subsp. japonica</name>
    <name type="common">Rice</name>
    <dbReference type="NCBI Taxonomy" id="39947"/>
    <lineage>
        <taxon>Eukaryota</taxon>
        <taxon>Viridiplantae</taxon>
        <taxon>Streptophyta</taxon>
        <taxon>Embryophyta</taxon>
        <taxon>Tracheophyta</taxon>
        <taxon>Spermatophyta</taxon>
        <taxon>Magnoliopsida</taxon>
        <taxon>Liliopsida</taxon>
        <taxon>Poales</taxon>
        <taxon>Poaceae</taxon>
        <taxon>BOP clade</taxon>
        <taxon>Oryzoideae</taxon>
        <taxon>Oryzeae</taxon>
        <taxon>Oryzinae</taxon>
        <taxon>Oryza</taxon>
        <taxon>Oryza sativa</taxon>
    </lineage>
</organism>
<feature type="signal peptide" evidence="1">
    <location>
        <begin position="1"/>
        <end position="33"/>
    </location>
</feature>
<feature type="chain" id="PRO_0000398323" description="Fe(2+) transport protein 1">
    <location>
        <begin position="34"/>
        <end position="374"/>
    </location>
</feature>
<feature type="topological domain" description="Extracellular" evidence="1">
    <location>
        <begin position="34"/>
        <end position="62"/>
    </location>
</feature>
<feature type="transmembrane region" description="Helical" evidence="1">
    <location>
        <begin position="63"/>
        <end position="83"/>
    </location>
</feature>
<feature type="topological domain" description="Cytoplasmic" evidence="1">
    <location>
        <begin position="84"/>
        <end position="92"/>
    </location>
</feature>
<feature type="transmembrane region" description="Helical" evidence="1">
    <location>
        <begin position="93"/>
        <end position="113"/>
    </location>
</feature>
<feature type="topological domain" description="Extracellular" evidence="1">
    <location>
        <begin position="114"/>
        <end position="137"/>
    </location>
</feature>
<feature type="transmembrane region" description="Helical" evidence="1">
    <location>
        <begin position="138"/>
        <end position="158"/>
    </location>
</feature>
<feature type="topological domain" description="Cytoplasmic" evidence="1">
    <location>
        <begin position="159"/>
        <end position="219"/>
    </location>
</feature>
<feature type="transmembrane region" description="Helical" evidence="1">
    <location>
        <begin position="220"/>
        <end position="240"/>
    </location>
</feature>
<feature type="topological domain" description="Extracellular" evidence="1">
    <location>
        <begin position="241"/>
        <end position="251"/>
    </location>
</feature>
<feature type="transmembrane region" description="Helical" evidence="1">
    <location>
        <begin position="252"/>
        <end position="272"/>
    </location>
</feature>
<feature type="topological domain" description="Cytoplasmic" evidence="1">
    <location>
        <begin position="273"/>
        <end position="282"/>
    </location>
</feature>
<feature type="transmembrane region" description="Helical" evidence="1">
    <location>
        <begin position="283"/>
        <end position="303"/>
    </location>
</feature>
<feature type="topological domain" description="Extracellular" evidence="1">
    <location>
        <begin position="304"/>
        <end position="313"/>
    </location>
</feature>
<feature type="transmembrane region" description="Helical" evidence="1">
    <location>
        <begin position="314"/>
        <end position="334"/>
    </location>
</feature>
<feature type="topological domain" description="Cytoplasmic" evidence="1">
    <location>
        <begin position="335"/>
        <end position="353"/>
    </location>
</feature>
<feature type="transmembrane region" description="Helical" evidence="1">
    <location>
        <begin position="354"/>
        <end position="374"/>
    </location>
</feature>
<feature type="region of interest" description="Disordered" evidence="2">
    <location>
        <begin position="166"/>
        <end position="199"/>
    </location>
</feature>
<feature type="compositionally biased region" description="Basic and acidic residues" evidence="2">
    <location>
        <begin position="179"/>
        <end position="188"/>
    </location>
</feature>
<feature type="sequence conflict" description="In Ref. 2; AAP92124." evidence="6" ref="2">
    <original>L</original>
    <variation>F</variation>
    <location>
        <position position="21"/>
    </location>
</feature>
<feature type="sequence conflict" description="In Ref. 2; AAP92124." evidence="6" ref="2">
    <original>N</original>
    <variation>K</variation>
    <location>
        <position position="162"/>
    </location>
</feature>
<feature type="sequence conflict" description="In Ref. 2; AAP92124." evidence="6" ref="2">
    <original>L</original>
    <variation>V</variation>
    <location>
        <position position="272"/>
    </location>
</feature>
<sequence length="374" mass="39057">MATPRTLVPILPPVAALLLLLVAASSIPILAAAQPADACGGAPDQAAADGACHDVPRALRLKLIAIPTILVSSVVGVCLPLLSRSVPALRPDGGLFAVVKAFASGVILATGYMHVLPDAFNNLTSPCLPRKPWSEFPFAAFVAMLAAVSTLMADSLMLTYYNRSKPRPSSGGDVAAVADHGESPDQGHRHGHGHGHGHGMAVAKPDDVEATQVQLRRNRVVVQVLEIGIVVHSVVIGLGMGASQNVCTIRPLVAAMCFHQMFEGMGLGGCILQAEYGRRMRSVLVFFFSTTTPFGIALGLALTRVYRDNSPTALIVVGLLNAASAGLLHYMALVELLAADFMGPKLQGNVRLQLAAFLAVLLGAGGMSVMAKWA</sequence>
<dbReference type="EMBL" id="AB070226">
    <property type="protein sequence ID" value="BAB85123.1"/>
    <property type="molecule type" value="mRNA"/>
</dbReference>
<dbReference type="EMBL" id="AY327039">
    <property type="protein sequence ID" value="AAP92124.1"/>
    <property type="molecule type" value="mRNA"/>
</dbReference>
<dbReference type="EMBL" id="AC135792">
    <property type="protein sequence ID" value="AAR87178.1"/>
    <property type="molecule type" value="Genomic_DNA"/>
</dbReference>
<dbReference type="EMBL" id="AC145388">
    <property type="protein sequence ID" value="AAU89145.1"/>
    <property type="molecule type" value="Genomic_DNA"/>
</dbReference>
<dbReference type="EMBL" id="DP000009">
    <property type="protein sequence ID" value="ABF98084.1"/>
    <property type="molecule type" value="Genomic_DNA"/>
</dbReference>
<dbReference type="EMBL" id="AP008209">
    <property type="protein sequence ID" value="BAF12767.1"/>
    <property type="molecule type" value="Genomic_DNA"/>
</dbReference>
<dbReference type="EMBL" id="AP014959">
    <property type="protein sequence ID" value="BAS85654.1"/>
    <property type="molecule type" value="Genomic_DNA"/>
</dbReference>
<dbReference type="EMBL" id="AK107681">
    <property type="protein sequence ID" value="BAG98121.1"/>
    <property type="molecule type" value="mRNA"/>
</dbReference>
<dbReference type="RefSeq" id="XP_015632375.1">
    <property type="nucleotide sequence ID" value="XM_015776889.1"/>
</dbReference>
<dbReference type="SMR" id="Q75HB1"/>
<dbReference type="FunCoup" id="Q75HB1">
    <property type="interactions" value="1745"/>
</dbReference>
<dbReference type="STRING" id="39947.Q75HB1"/>
<dbReference type="PaxDb" id="39947-Q75HB1"/>
<dbReference type="EnsemblPlants" id="Os03t0667500-01">
    <property type="protein sequence ID" value="Os03t0667500-01"/>
    <property type="gene ID" value="Os03g0667500"/>
</dbReference>
<dbReference type="Gramene" id="Os03t0667500-01">
    <property type="protein sequence ID" value="Os03t0667500-01"/>
    <property type="gene ID" value="Os03g0667500"/>
</dbReference>
<dbReference type="KEGG" id="dosa:Os03g0667500"/>
<dbReference type="eggNOG" id="KOG1558">
    <property type="taxonomic scope" value="Eukaryota"/>
</dbReference>
<dbReference type="HOGENOM" id="CLU_027089_3_0_1"/>
<dbReference type="InParanoid" id="Q75HB1"/>
<dbReference type="OMA" id="QYTGCHS"/>
<dbReference type="OrthoDB" id="448280at2759"/>
<dbReference type="BioCyc" id="MetaCyc:MONOMER-14000"/>
<dbReference type="PlantReactome" id="R-OSA-9025727">
    <property type="pathway name" value="Iron uptake and transport in root vascular system"/>
</dbReference>
<dbReference type="Proteomes" id="UP000000763">
    <property type="component" value="Chromosome 3"/>
</dbReference>
<dbReference type="Proteomes" id="UP000059680">
    <property type="component" value="Chromosome 3"/>
</dbReference>
<dbReference type="GO" id="GO:0005886">
    <property type="term" value="C:plasma membrane"/>
    <property type="evidence" value="ECO:0000314"/>
    <property type="project" value="UniProtKB"/>
</dbReference>
<dbReference type="GO" id="GO:0005385">
    <property type="term" value="F:zinc ion transmembrane transporter activity"/>
    <property type="evidence" value="ECO:0000318"/>
    <property type="project" value="GO_Central"/>
</dbReference>
<dbReference type="GO" id="GO:0015691">
    <property type="term" value="P:cadmium ion transport"/>
    <property type="evidence" value="ECO:0000315"/>
    <property type="project" value="UniProtKB"/>
</dbReference>
<dbReference type="GO" id="GO:0006826">
    <property type="term" value="P:iron ion transport"/>
    <property type="evidence" value="ECO:0000315"/>
    <property type="project" value="UniProtKB"/>
</dbReference>
<dbReference type="GO" id="GO:0071577">
    <property type="term" value="P:zinc ion transmembrane transport"/>
    <property type="evidence" value="ECO:0000318"/>
    <property type="project" value="GO_Central"/>
</dbReference>
<dbReference type="GO" id="GO:0006829">
    <property type="term" value="P:zinc ion transport"/>
    <property type="evidence" value="ECO:0000315"/>
    <property type="project" value="UniProtKB"/>
</dbReference>
<dbReference type="InterPro" id="IPR003689">
    <property type="entry name" value="ZIP"/>
</dbReference>
<dbReference type="InterPro" id="IPR004698">
    <property type="entry name" value="Zn/Fe_permease_fun/pln"/>
</dbReference>
<dbReference type="NCBIfam" id="TIGR00820">
    <property type="entry name" value="zip"/>
    <property type="match status" value="1"/>
</dbReference>
<dbReference type="PANTHER" id="PTHR11040:SF220">
    <property type="entry name" value="FE(2+) TRANSPORT PROTEIN 1"/>
    <property type="match status" value="1"/>
</dbReference>
<dbReference type="PANTHER" id="PTHR11040">
    <property type="entry name" value="ZINC/IRON TRANSPORTER"/>
    <property type="match status" value="1"/>
</dbReference>
<dbReference type="Pfam" id="PF02535">
    <property type="entry name" value="Zip"/>
    <property type="match status" value="1"/>
</dbReference>